<name>GLGA1_BRADU</name>
<proteinExistence type="inferred from homology"/>
<protein>
    <recommendedName>
        <fullName evidence="1">Glycogen synthase 1</fullName>
        <ecNumber evidence="1">2.4.1.21</ecNumber>
    </recommendedName>
    <alternativeName>
        <fullName evidence="1">Starch [bacterial glycogen] synthase 1</fullName>
    </alternativeName>
</protein>
<comment type="function">
    <text evidence="1">Synthesizes alpha-1,4-glucan chains using ADP-glucose.</text>
</comment>
<comment type="catalytic activity">
    <reaction evidence="1">
        <text>[(1-&gt;4)-alpha-D-glucosyl](n) + ADP-alpha-D-glucose = [(1-&gt;4)-alpha-D-glucosyl](n+1) + ADP + H(+)</text>
        <dbReference type="Rhea" id="RHEA:18189"/>
        <dbReference type="Rhea" id="RHEA-COMP:9584"/>
        <dbReference type="Rhea" id="RHEA-COMP:9587"/>
        <dbReference type="ChEBI" id="CHEBI:15378"/>
        <dbReference type="ChEBI" id="CHEBI:15444"/>
        <dbReference type="ChEBI" id="CHEBI:57498"/>
        <dbReference type="ChEBI" id="CHEBI:456216"/>
        <dbReference type="EC" id="2.4.1.21"/>
    </reaction>
</comment>
<comment type="pathway">
    <text evidence="1">Glycan biosynthesis; glycogen biosynthesis.</text>
</comment>
<comment type="similarity">
    <text evidence="1">Belongs to the glycosyltransferase 1 family. Bacterial/plant glycogen synthase subfamily.</text>
</comment>
<reference key="1">
    <citation type="journal article" date="2002" name="DNA Res.">
        <title>Complete genomic sequence of nitrogen-fixing symbiotic bacterium Bradyrhizobium japonicum USDA110.</title>
        <authorList>
            <person name="Kaneko T."/>
            <person name="Nakamura Y."/>
            <person name="Sato S."/>
            <person name="Minamisawa K."/>
            <person name="Uchiumi T."/>
            <person name="Sasamoto S."/>
            <person name="Watanabe A."/>
            <person name="Idesawa K."/>
            <person name="Iriguchi M."/>
            <person name="Kawashima K."/>
            <person name="Kohara M."/>
            <person name="Matsumoto M."/>
            <person name="Shimpo S."/>
            <person name="Tsuruoka H."/>
            <person name="Wada T."/>
            <person name="Yamada M."/>
            <person name="Tabata S."/>
        </authorList>
    </citation>
    <scope>NUCLEOTIDE SEQUENCE [LARGE SCALE GENOMIC DNA]</scope>
    <source>
        <strain>JCM 10833 / BCRC 13528 / IAM 13628 / NBRC 14792 / USDA 110</strain>
    </source>
</reference>
<dbReference type="EC" id="2.4.1.21" evidence="1"/>
<dbReference type="EMBL" id="BA000040">
    <property type="protein sequence ID" value="BAC48043.1"/>
    <property type="molecule type" value="Genomic_DNA"/>
</dbReference>
<dbReference type="RefSeq" id="NP_769418.1">
    <property type="nucleotide sequence ID" value="NC_004463.1"/>
</dbReference>
<dbReference type="SMR" id="Q89RJ4"/>
<dbReference type="STRING" id="224911.AAV28_10915"/>
<dbReference type="CAZy" id="GT5">
    <property type="family name" value="Glycosyltransferase Family 5"/>
</dbReference>
<dbReference type="EnsemblBacteria" id="BAC48043">
    <property type="protein sequence ID" value="BAC48043"/>
    <property type="gene ID" value="BAC48043"/>
</dbReference>
<dbReference type="KEGG" id="bja:bll2778"/>
<dbReference type="PATRIC" id="fig|224911.5.peg.2760"/>
<dbReference type="eggNOG" id="COG0297">
    <property type="taxonomic scope" value="Bacteria"/>
</dbReference>
<dbReference type="HOGENOM" id="CLU_009583_18_4_5"/>
<dbReference type="InParanoid" id="Q89RJ4"/>
<dbReference type="OrthoDB" id="9808590at2"/>
<dbReference type="PhylomeDB" id="Q89RJ4"/>
<dbReference type="UniPathway" id="UPA00164"/>
<dbReference type="Proteomes" id="UP000002526">
    <property type="component" value="Chromosome"/>
</dbReference>
<dbReference type="GO" id="GO:0009011">
    <property type="term" value="F:alpha-1,4-glucan glucosyltransferase (ADP-glucose donor) activity"/>
    <property type="evidence" value="ECO:0007669"/>
    <property type="project" value="UniProtKB-UniRule"/>
</dbReference>
<dbReference type="GO" id="GO:0004373">
    <property type="term" value="F:alpha-1,4-glucan glucosyltransferase (UDP-glucose donor) activity"/>
    <property type="evidence" value="ECO:0007669"/>
    <property type="project" value="InterPro"/>
</dbReference>
<dbReference type="GO" id="GO:0005978">
    <property type="term" value="P:glycogen biosynthetic process"/>
    <property type="evidence" value="ECO:0007669"/>
    <property type="project" value="UniProtKB-UniRule"/>
</dbReference>
<dbReference type="CDD" id="cd03791">
    <property type="entry name" value="GT5_Glycogen_synthase_DULL1-like"/>
    <property type="match status" value="1"/>
</dbReference>
<dbReference type="Gene3D" id="3.40.50.2000">
    <property type="entry name" value="Glycogen Phosphorylase B"/>
    <property type="match status" value="2"/>
</dbReference>
<dbReference type="HAMAP" id="MF_00484">
    <property type="entry name" value="Glycogen_synth"/>
    <property type="match status" value="1"/>
</dbReference>
<dbReference type="InterPro" id="IPR001296">
    <property type="entry name" value="Glyco_trans_1"/>
</dbReference>
<dbReference type="InterPro" id="IPR011835">
    <property type="entry name" value="GS/SS"/>
</dbReference>
<dbReference type="InterPro" id="IPR013534">
    <property type="entry name" value="Starch_synth_cat_dom"/>
</dbReference>
<dbReference type="NCBIfam" id="TIGR02095">
    <property type="entry name" value="glgA"/>
    <property type="match status" value="1"/>
</dbReference>
<dbReference type="NCBIfam" id="NF001899">
    <property type="entry name" value="PRK00654.1-2"/>
    <property type="match status" value="1"/>
</dbReference>
<dbReference type="NCBIfam" id="NF001901">
    <property type="entry name" value="PRK00654.1-5"/>
    <property type="match status" value="1"/>
</dbReference>
<dbReference type="PANTHER" id="PTHR45825:SF8">
    <property type="entry name" value="GLYCOGEN SYNTHASE"/>
    <property type="match status" value="1"/>
</dbReference>
<dbReference type="PANTHER" id="PTHR45825">
    <property type="entry name" value="GRANULE-BOUND STARCH SYNTHASE 1, CHLOROPLASTIC/AMYLOPLASTIC"/>
    <property type="match status" value="1"/>
</dbReference>
<dbReference type="Pfam" id="PF08323">
    <property type="entry name" value="Glyco_transf_5"/>
    <property type="match status" value="1"/>
</dbReference>
<dbReference type="Pfam" id="PF00534">
    <property type="entry name" value="Glycos_transf_1"/>
    <property type="match status" value="1"/>
</dbReference>
<dbReference type="SUPFAM" id="SSF53756">
    <property type="entry name" value="UDP-Glycosyltransferase/glycogen phosphorylase"/>
    <property type="match status" value="1"/>
</dbReference>
<gene>
    <name evidence="1" type="primary">glgA1</name>
    <name type="ordered locus">bll2778</name>
</gene>
<accession>Q89RJ4</accession>
<evidence type="ECO:0000255" key="1">
    <source>
        <dbReference type="HAMAP-Rule" id="MF_00484"/>
    </source>
</evidence>
<feature type="chain" id="PRO_0000188600" description="Glycogen synthase 1">
    <location>
        <begin position="1"/>
        <end position="462"/>
    </location>
</feature>
<feature type="binding site" evidence="1">
    <location>
        <position position="6"/>
    </location>
    <ligand>
        <name>ADP-alpha-D-glucose</name>
        <dbReference type="ChEBI" id="CHEBI:57498"/>
    </ligand>
</feature>
<sequence length="462" mass="50145">MDDFVRVGGLGAVSAALPRALRPFADIRIMLPGYRDIIEQLTHIQIVGRCPSFADLPACSLGRAATKDGLPVYVLLCSQLYDRPGNPYGDESGRDWPDNDIRFARFASAAAELAMGKLDKNWAADLIHANDWQASLVPAYLAWRGAKLPSILTIHNLAYQGLFPKDSLRRIGAPESAFHIDGLEFYDQVSFLKAGLVYASHLTTVSGTYAREITTAEFGCGLEGLLRLRSDAAELTGILNGIDESWDPRSCAQLAQQFGAGDWVGKKANADYVRKQFGLAVSRGPMFGIVARLVHQKGIDLVLSAADEIIDAGGQIVVTGSGEPALEQALIDAHRRRPDAIGVAIGFNDAQARRIFAGSDFTLMPSRFEPCGLSQMYAQRFGSLPIGHQTGGLAETITDGETGFLFSRPSHESFLGGVRRAFEAFMAQDQLDSMRRSAMGRSFSWSISADSYSALYRKLAAV</sequence>
<organism>
    <name type="scientific">Bradyrhizobium diazoefficiens (strain JCM 10833 / BCRC 13528 / IAM 13628 / NBRC 14792 / USDA 110)</name>
    <dbReference type="NCBI Taxonomy" id="224911"/>
    <lineage>
        <taxon>Bacteria</taxon>
        <taxon>Pseudomonadati</taxon>
        <taxon>Pseudomonadota</taxon>
        <taxon>Alphaproteobacteria</taxon>
        <taxon>Hyphomicrobiales</taxon>
        <taxon>Nitrobacteraceae</taxon>
        <taxon>Bradyrhizobium</taxon>
    </lineage>
</organism>
<keyword id="KW-0320">Glycogen biosynthesis</keyword>
<keyword id="KW-0328">Glycosyltransferase</keyword>
<keyword id="KW-1185">Reference proteome</keyword>
<keyword id="KW-0808">Transferase</keyword>